<reference key="1">
    <citation type="journal article" date="2000" name="Science">
        <title>The genome sequence of Drosophila melanogaster.</title>
        <authorList>
            <person name="Adams M.D."/>
            <person name="Celniker S.E."/>
            <person name="Holt R.A."/>
            <person name="Evans C.A."/>
            <person name="Gocayne J.D."/>
            <person name="Amanatides P.G."/>
            <person name="Scherer S.E."/>
            <person name="Li P.W."/>
            <person name="Hoskins R.A."/>
            <person name="Galle R.F."/>
            <person name="George R.A."/>
            <person name="Lewis S.E."/>
            <person name="Richards S."/>
            <person name="Ashburner M."/>
            <person name="Henderson S.N."/>
            <person name="Sutton G.G."/>
            <person name="Wortman J.R."/>
            <person name="Yandell M.D."/>
            <person name="Zhang Q."/>
            <person name="Chen L.X."/>
            <person name="Brandon R.C."/>
            <person name="Rogers Y.-H.C."/>
            <person name="Blazej R.G."/>
            <person name="Champe M."/>
            <person name="Pfeiffer B.D."/>
            <person name="Wan K.H."/>
            <person name="Doyle C."/>
            <person name="Baxter E.G."/>
            <person name="Helt G."/>
            <person name="Nelson C.R."/>
            <person name="Miklos G.L.G."/>
            <person name="Abril J.F."/>
            <person name="Agbayani A."/>
            <person name="An H.-J."/>
            <person name="Andrews-Pfannkoch C."/>
            <person name="Baldwin D."/>
            <person name="Ballew R.M."/>
            <person name="Basu A."/>
            <person name="Baxendale J."/>
            <person name="Bayraktaroglu L."/>
            <person name="Beasley E.M."/>
            <person name="Beeson K.Y."/>
            <person name="Benos P.V."/>
            <person name="Berman B.P."/>
            <person name="Bhandari D."/>
            <person name="Bolshakov S."/>
            <person name="Borkova D."/>
            <person name="Botchan M.R."/>
            <person name="Bouck J."/>
            <person name="Brokstein P."/>
            <person name="Brottier P."/>
            <person name="Burtis K.C."/>
            <person name="Busam D.A."/>
            <person name="Butler H."/>
            <person name="Cadieu E."/>
            <person name="Center A."/>
            <person name="Chandra I."/>
            <person name="Cherry J.M."/>
            <person name="Cawley S."/>
            <person name="Dahlke C."/>
            <person name="Davenport L.B."/>
            <person name="Davies P."/>
            <person name="de Pablos B."/>
            <person name="Delcher A."/>
            <person name="Deng Z."/>
            <person name="Mays A.D."/>
            <person name="Dew I."/>
            <person name="Dietz S.M."/>
            <person name="Dodson K."/>
            <person name="Doup L.E."/>
            <person name="Downes M."/>
            <person name="Dugan-Rocha S."/>
            <person name="Dunkov B.C."/>
            <person name="Dunn P."/>
            <person name="Durbin K.J."/>
            <person name="Evangelista C.C."/>
            <person name="Ferraz C."/>
            <person name="Ferriera S."/>
            <person name="Fleischmann W."/>
            <person name="Fosler C."/>
            <person name="Gabrielian A.E."/>
            <person name="Garg N.S."/>
            <person name="Gelbart W.M."/>
            <person name="Glasser K."/>
            <person name="Glodek A."/>
            <person name="Gong F."/>
            <person name="Gorrell J.H."/>
            <person name="Gu Z."/>
            <person name="Guan P."/>
            <person name="Harris M."/>
            <person name="Harris N.L."/>
            <person name="Harvey D.A."/>
            <person name="Heiman T.J."/>
            <person name="Hernandez J.R."/>
            <person name="Houck J."/>
            <person name="Hostin D."/>
            <person name="Houston K.A."/>
            <person name="Howland T.J."/>
            <person name="Wei M.-H."/>
            <person name="Ibegwam C."/>
            <person name="Jalali M."/>
            <person name="Kalush F."/>
            <person name="Karpen G.H."/>
            <person name="Ke Z."/>
            <person name="Kennison J.A."/>
            <person name="Ketchum K.A."/>
            <person name="Kimmel B.E."/>
            <person name="Kodira C.D."/>
            <person name="Kraft C.L."/>
            <person name="Kravitz S."/>
            <person name="Kulp D."/>
            <person name="Lai Z."/>
            <person name="Lasko P."/>
            <person name="Lei Y."/>
            <person name="Levitsky A.A."/>
            <person name="Li J.H."/>
            <person name="Li Z."/>
            <person name="Liang Y."/>
            <person name="Lin X."/>
            <person name="Liu X."/>
            <person name="Mattei B."/>
            <person name="McIntosh T.C."/>
            <person name="McLeod M.P."/>
            <person name="McPherson D."/>
            <person name="Merkulov G."/>
            <person name="Milshina N.V."/>
            <person name="Mobarry C."/>
            <person name="Morris J."/>
            <person name="Moshrefi A."/>
            <person name="Mount S.M."/>
            <person name="Moy M."/>
            <person name="Murphy B."/>
            <person name="Murphy L."/>
            <person name="Muzny D.M."/>
            <person name="Nelson D.L."/>
            <person name="Nelson D.R."/>
            <person name="Nelson K.A."/>
            <person name="Nixon K."/>
            <person name="Nusskern D.R."/>
            <person name="Pacleb J.M."/>
            <person name="Palazzolo M."/>
            <person name="Pittman G.S."/>
            <person name="Pan S."/>
            <person name="Pollard J."/>
            <person name="Puri V."/>
            <person name="Reese M.G."/>
            <person name="Reinert K."/>
            <person name="Remington K."/>
            <person name="Saunders R.D.C."/>
            <person name="Scheeler F."/>
            <person name="Shen H."/>
            <person name="Shue B.C."/>
            <person name="Siden-Kiamos I."/>
            <person name="Simpson M."/>
            <person name="Skupski M.P."/>
            <person name="Smith T.J."/>
            <person name="Spier E."/>
            <person name="Spradling A.C."/>
            <person name="Stapleton M."/>
            <person name="Strong R."/>
            <person name="Sun E."/>
            <person name="Svirskas R."/>
            <person name="Tector C."/>
            <person name="Turner R."/>
            <person name="Venter E."/>
            <person name="Wang A.H."/>
            <person name="Wang X."/>
            <person name="Wang Z.-Y."/>
            <person name="Wassarman D.A."/>
            <person name="Weinstock G.M."/>
            <person name="Weissenbach J."/>
            <person name="Williams S.M."/>
            <person name="Woodage T."/>
            <person name="Worley K.C."/>
            <person name="Wu D."/>
            <person name="Yang S."/>
            <person name="Yao Q.A."/>
            <person name="Ye J."/>
            <person name="Yeh R.-F."/>
            <person name="Zaveri J.S."/>
            <person name="Zhan M."/>
            <person name="Zhang G."/>
            <person name="Zhao Q."/>
            <person name="Zheng L."/>
            <person name="Zheng X.H."/>
            <person name="Zhong F.N."/>
            <person name="Zhong W."/>
            <person name="Zhou X."/>
            <person name="Zhu S.C."/>
            <person name="Zhu X."/>
            <person name="Smith H.O."/>
            <person name="Gibbs R.A."/>
            <person name="Myers E.W."/>
            <person name="Rubin G.M."/>
            <person name="Venter J.C."/>
        </authorList>
    </citation>
    <scope>NUCLEOTIDE SEQUENCE [LARGE SCALE GENOMIC DNA]</scope>
    <source>
        <strain>Berkeley</strain>
    </source>
</reference>
<reference key="2">
    <citation type="journal article" date="2002" name="Genome Biol.">
        <title>Annotation of the Drosophila melanogaster euchromatic genome: a systematic review.</title>
        <authorList>
            <person name="Misra S."/>
            <person name="Crosby M.A."/>
            <person name="Mungall C.J."/>
            <person name="Matthews B.B."/>
            <person name="Campbell K.S."/>
            <person name="Hradecky P."/>
            <person name="Huang Y."/>
            <person name="Kaminker J.S."/>
            <person name="Millburn G.H."/>
            <person name="Prochnik S.E."/>
            <person name="Smith C.D."/>
            <person name="Tupy J.L."/>
            <person name="Whitfield E.J."/>
            <person name="Bayraktaroglu L."/>
            <person name="Berman B.P."/>
            <person name="Bettencourt B.R."/>
            <person name="Celniker S.E."/>
            <person name="de Grey A.D.N.J."/>
            <person name="Drysdale R.A."/>
            <person name="Harris N.L."/>
            <person name="Richter J."/>
            <person name="Russo S."/>
            <person name="Schroeder A.J."/>
            <person name="Shu S.Q."/>
            <person name="Stapleton M."/>
            <person name="Yamada C."/>
            <person name="Ashburner M."/>
            <person name="Gelbart W.M."/>
            <person name="Rubin G.M."/>
            <person name="Lewis S.E."/>
        </authorList>
    </citation>
    <scope>GENOME REANNOTATION</scope>
    <source>
        <strain>Berkeley</strain>
    </source>
</reference>
<reference key="3">
    <citation type="journal article" date="2024" name="Sci. Adv.">
        <title>The Ptch/SPOUT1 methyltransferase deposits an m3U modification on 28S rRNA for normal ribosomal function in flies and humans.</title>
        <authorList>
            <person name="Chen J."/>
            <person name="Bai Y."/>
            <person name="Huang Y."/>
            <person name="Cui M."/>
            <person name="Wang Y."/>
            <person name="Gu Z."/>
            <person name="Wu X."/>
            <person name="Li Y."/>
            <person name="Rong Y.S."/>
        </authorList>
    </citation>
    <scope>FUNCTION</scope>
    <scope>CATALYTIC ACTIVITY</scope>
    <scope>SUBCELLULAR LOCATION</scope>
</reference>
<sequence length="485" mass="53881">MKTMLAAPTASSNGRPIGPHKSWKKVNEERKALKRQRKQDKLLKELQQAKEAESQAGKAANEVQAKDKPNPSTLSIAVPGSILENAQSNELRAYVAGQIARAACIFRVNEVIVFDDVGIATARETKRSYEADGEGSSTGTVRSSSLQLARILQYLECPQYLRKYFFPLHKDLKYSGLLNPLDTPHHLRQQSKFRYREGVICDKKAKEGHSYANVGLLNDVLVDKAIEPGVRVTVKMEPQSESCRKQRGTLVSPDEPRRETGVYWGYQVRIAHSMSEIFTKSPYATGYDVTVGTSDRGTNVHEVPNRSYNFNHMLIVFGGLQGLESALANDEKLTVDDPELLFDHYVNVLPRQGSRTIRTEEALLIALAALQEKLQPQVADVEIDLTDLLPKSEDSGIAVRRDVLVSKKQKKRKQVEDTPDETVVDEPSFSKPLPKVARLTANPFADSSEELAKNTPAQDDFEVVSSTTVSGTSHSCADDDLSRFD</sequence>
<comment type="function">
    <text evidence="2">S-adenosyl-L-methionine-dependent methyltransferase that specifically methylates the uridine in position 3485 of 28S rRNA.</text>
</comment>
<comment type="catalytic activity">
    <reaction evidence="2">
        <text>uridine in 28S rRNA + S-adenosyl-L-methionine = N(3)-methyluridine in 28S rRNA + S-adenosyl-L-homocysteine + H(+)</text>
        <dbReference type="Rhea" id="RHEA:83635"/>
        <dbReference type="Rhea" id="RHEA-COMP:20178"/>
        <dbReference type="Rhea" id="RHEA-COMP:20181"/>
        <dbReference type="ChEBI" id="CHEBI:15378"/>
        <dbReference type="ChEBI" id="CHEBI:57856"/>
        <dbReference type="ChEBI" id="CHEBI:59789"/>
        <dbReference type="ChEBI" id="CHEBI:65315"/>
        <dbReference type="ChEBI" id="CHEBI:74502"/>
    </reaction>
    <physiologicalReaction direction="left-to-right" evidence="5">
        <dbReference type="Rhea" id="RHEA:83636"/>
    </physiologicalReaction>
</comment>
<comment type="subcellular location">
    <subcellularLocation>
        <location evidence="2">Nucleus</location>
    </subcellularLocation>
</comment>
<comment type="similarity">
    <text evidence="4">Belongs to the class IV-like SAM-binding methyltransferase superfamily.</text>
</comment>
<gene>
    <name evidence="3" type="primary">ptch</name>
    <name evidence="6" type="ORF">CG12128</name>
</gene>
<evidence type="ECO:0000250" key="1">
    <source>
        <dbReference type="UniProtKB" id="Q5T280"/>
    </source>
</evidence>
<evidence type="ECO:0000269" key="2">
    <source>
    </source>
</evidence>
<evidence type="ECO:0000303" key="3">
    <source>
    </source>
</evidence>
<evidence type="ECO:0000305" key="4"/>
<evidence type="ECO:0000305" key="5">
    <source>
    </source>
</evidence>
<evidence type="ECO:0000312" key="6">
    <source>
        <dbReference type="EMBL" id="AAF58861.1"/>
    </source>
</evidence>
<feature type="chain" id="PRO_0000462209" description="28S rRNA (uridine-N(3))-methyltransferase">
    <location>
        <begin position="1"/>
        <end position="485"/>
    </location>
</feature>
<feature type="binding site" evidence="1">
    <location>
        <position position="296"/>
    </location>
    <ligand>
        <name>S-adenosyl-L-methionine</name>
        <dbReference type="ChEBI" id="CHEBI:59789"/>
    </ligand>
</feature>
<feature type="binding site" evidence="1">
    <location>
        <position position="318"/>
    </location>
    <ligand>
        <name>S-adenosyl-L-methionine</name>
        <dbReference type="ChEBI" id="CHEBI:59789"/>
    </ligand>
</feature>
<feature type="binding site" evidence="1">
    <location>
        <position position="347"/>
    </location>
    <ligand>
        <name>S-adenosyl-L-methionine</name>
        <dbReference type="ChEBI" id="CHEBI:59789"/>
    </ligand>
</feature>
<organism>
    <name type="scientific">Drosophila melanogaster</name>
    <name type="common">Fruit fly</name>
    <dbReference type="NCBI Taxonomy" id="7227"/>
    <lineage>
        <taxon>Eukaryota</taxon>
        <taxon>Metazoa</taxon>
        <taxon>Ecdysozoa</taxon>
        <taxon>Arthropoda</taxon>
        <taxon>Hexapoda</taxon>
        <taxon>Insecta</taxon>
        <taxon>Pterygota</taxon>
        <taxon>Neoptera</taxon>
        <taxon>Endopterygota</taxon>
        <taxon>Diptera</taxon>
        <taxon>Brachycera</taxon>
        <taxon>Muscomorpha</taxon>
        <taxon>Ephydroidea</taxon>
        <taxon>Drosophilidae</taxon>
        <taxon>Drosophila</taxon>
        <taxon>Sophophora</taxon>
    </lineage>
</organism>
<dbReference type="EC" id="2.1.1.-" evidence="2"/>
<dbReference type="EMBL" id="AE013599">
    <property type="protein sequence ID" value="AAF58861.1"/>
    <property type="molecule type" value="Genomic_DNA"/>
</dbReference>
<dbReference type="RefSeq" id="NP_610543.1">
    <property type="nucleotide sequence ID" value="NM_136699.4"/>
</dbReference>
<dbReference type="SMR" id="A1Z830"/>
<dbReference type="FunCoup" id="A1Z830">
    <property type="interactions" value="885"/>
</dbReference>
<dbReference type="IntAct" id="A1Z830">
    <property type="interactions" value="1"/>
</dbReference>
<dbReference type="STRING" id="7227.FBpp0087481"/>
<dbReference type="PaxDb" id="7227-FBpp0087481"/>
<dbReference type="EnsemblMetazoa" id="FBtr0088393">
    <property type="protein sequence ID" value="FBpp0087481"/>
    <property type="gene ID" value="FBgn0033473"/>
</dbReference>
<dbReference type="GeneID" id="36042"/>
<dbReference type="KEGG" id="dme:Dmel_CG12128"/>
<dbReference type="UCSC" id="CG12128-RA">
    <property type="organism name" value="d. melanogaster"/>
</dbReference>
<dbReference type="AGR" id="FB:FBgn0033473"/>
<dbReference type="FlyBase" id="FBgn0033473">
    <property type="gene designation" value="CG12128"/>
</dbReference>
<dbReference type="VEuPathDB" id="VectorBase:FBgn0033473"/>
<dbReference type="eggNOG" id="KOG3925">
    <property type="taxonomic scope" value="Eukaryota"/>
</dbReference>
<dbReference type="GeneTree" id="ENSGT00390000016537"/>
<dbReference type="HOGENOM" id="CLU_017233_4_0_1"/>
<dbReference type="InParanoid" id="A1Z830"/>
<dbReference type="OMA" id="FFPIHKD"/>
<dbReference type="OrthoDB" id="202625at2759"/>
<dbReference type="PhylomeDB" id="A1Z830"/>
<dbReference type="BioGRID-ORCS" id="36042">
    <property type="hits" value="0 hits in 1 CRISPR screen"/>
</dbReference>
<dbReference type="ChiTaRS" id="CG12128">
    <property type="organism name" value="fly"/>
</dbReference>
<dbReference type="Proteomes" id="UP000000803">
    <property type="component" value="Chromosome 2R"/>
</dbReference>
<dbReference type="Bgee" id="FBgn0033473">
    <property type="expression patterns" value="Expressed in spermatocyte in testis and 140 other cell types or tissues"/>
</dbReference>
<dbReference type="ExpressionAtlas" id="A1Z830">
    <property type="expression patterns" value="baseline and differential"/>
</dbReference>
<dbReference type="GO" id="GO:0005730">
    <property type="term" value="C:nucleolus"/>
    <property type="evidence" value="ECO:0000314"/>
    <property type="project" value="FlyBase"/>
</dbReference>
<dbReference type="GO" id="GO:0008173">
    <property type="term" value="F:RNA methyltransferase activity"/>
    <property type="evidence" value="ECO:0000255"/>
    <property type="project" value="FlyBase"/>
</dbReference>
<dbReference type="GO" id="GO:0070042">
    <property type="term" value="F:rRNA (uridine-N3-)-methyltransferase activity"/>
    <property type="evidence" value="ECO:0000314"/>
    <property type="project" value="FlyBase"/>
</dbReference>
<dbReference type="GO" id="GO:1904047">
    <property type="term" value="F:S-adenosyl-L-methionine binding"/>
    <property type="evidence" value="ECO:0000250"/>
    <property type="project" value="UniProtKB"/>
</dbReference>
<dbReference type="GO" id="GO:0000154">
    <property type="term" value="P:rRNA modification"/>
    <property type="evidence" value="ECO:0000314"/>
    <property type="project" value="FlyBase"/>
</dbReference>
<dbReference type="CDD" id="cd18086">
    <property type="entry name" value="HsC9orf114-like"/>
    <property type="match status" value="1"/>
</dbReference>
<dbReference type="Gene3D" id="3.40.1280.10">
    <property type="match status" value="1"/>
</dbReference>
<dbReference type="Gene3D" id="2.40.50.140">
    <property type="entry name" value="Nucleic acid-binding proteins"/>
    <property type="match status" value="1"/>
</dbReference>
<dbReference type="InterPro" id="IPR029028">
    <property type="entry name" value="Alpha/beta_knot_MTases"/>
</dbReference>
<dbReference type="InterPro" id="IPR012340">
    <property type="entry name" value="NA-bd_OB-fold"/>
</dbReference>
<dbReference type="InterPro" id="IPR003750">
    <property type="entry name" value="Put_MeTrfase-C9orf114-like"/>
</dbReference>
<dbReference type="InterPro" id="IPR029026">
    <property type="entry name" value="tRNA_m1G_MTases_N"/>
</dbReference>
<dbReference type="PANTHER" id="PTHR12150">
    <property type="entry name" value="CLASS IV SAM-BINDING METHYLTRANSFERASE-RELATED"/>
    <property type="match status" value="1"/>
</dbReference>
<dbReference type="PANTHER" id="PTHR12150:SF13">
    <property type="entry name" value="METHYLTRANSFERASE C9ORF114-RELATED"/>
    <property type="match status" value="1"/>
</dbReference>
<dbReference type="Pfam" id="PF02598">
    <property type="entry name" value="Methyltrn_RNA_3"/>
    <property type="match status" value="1"/>
</dbReference>
<dbReference type="SUPFAM" id="SSF75217">
    <property type="entry name" value="alpha/beta knot"/>
    <property type="match status" value="1"/>
</dbReference>
<dbReference type="SUPFAM" id="SSF50249">
    <property type="entry name" value="Nucleic acid-binding proteins"/>
    <property type="match status" value="1"/>
</dbReference>
<protein>
    <recommendedName>
        <fullName>28S rRNA (uridine-N(3))-methyltransferase</fullName>
        <ecNumber evidence="2">2.1.1.-</ecNumber>
    </recommendedName>
</protein>
<keyword id="KW-0489">Methyltransferase</keyword>
<keyword id="KW-0539">Nucleus</keyword>
<keyword id="KW-1185">Reference proteome</keyword>
<keyword id="KW-0698">rRNA processing</keyword>
<keyword id="KW-0949">S-adenosyl-L-methionine</keyword>
<keyword id="KW-0808">Transferase</keyword>
<name>SPOUT_DROME</name>
<accession>A1Z830</accession>
<proteinExistence type="evidence at protein level"/>